<reference key="1">
    <citation type="journal article" date="2003" name="Nature">
        <title>The DNA sequence of human chromosome 7.</title>
        <authorList>
            <person name="Hillier L.W."/>
            <person name="Fulton R.S."/>
            <person name="Fulton L.A."/>
            <person name="Graves T.A."/>
            <person name="Pepin K.H."/>
            <person name="Wagner-McPherson C."/>
            <person name="Layman D."/>
            <person name="Maas J."/>
            <person name="Jaeger S."/>
            <person name="Walker R."/>
            <person name="Wylie K."/>
            <person name="Sekhon M."/>
            <person name="Becker M.C."/>
            <person name="O'Laughlin M.D."/>
            <person name="Schaller M.E."/>
            <person name="Fewell G.A."/>
            <person name="Delehaunty K.D."/>
            <person name="Miner T.L."/>
            <person name="Nash W.E."/>
            <person name="Cordes M."/>
            <person name="Du H."/>
            <person name="Sun H."/>
            <person name="Edwards J."/>
            <person name="Bradshaw-Cordum H."/>
            <person name="Ali J."/>
            <person name="Andrews S."/>
            <person name="Isak A."/>
            <person name="Vanbrunt A."/>
            <person name="Nguyen C."/>
            <person name="Du F."/>
            <person name="Lamar B."/>
            <person name="Courtney L."/>
            <person name="Kalicki J."/>
            <person name="Ozersky P."/>
            <person name="Bielicki L."/>
            <person name="Scott K."/>
            <person name="Holmes A."/>
            <person name="Harkins R."/>
            <person name="Harris A."/>
            <person name="Strong C.M."/>
            <person name="Hou S."/>
            <person name="Tomlinson C."/>
            <person name="Dauphin-Kohlberg S."/>
            <person name="Kozlowicz-Reilly A."/>
            <person name="Leonard S."/>
            <person name="Rohlfing T."/>
            <person name="Rock S.M."/>
            <person name="Tin-Wollam A.-M."/>
            <person name="Abbott A."/>
            <person name="Minx P."/>
            <person name="Maupin R."/>
            <person name="Strowmatt C."/>
            <person name="Latreille P."/>
            <person name="Miller N."/>
            <person name="Johnson D."/>
            <person name="Murray J."/>
            <person name="Woessner J.P."/>
            <person name="Wendl M.C."/>
            <person name="Yang S.-P."/>
            <person name="Schultz B.R."/>
            <person name="Wallis J.W."/>
            <person name="Spieth J."/>
            <person name="Bieri T.A."/>
            <person name="Nelson J.O."/>
            <person name="Berkowicz N."/>
            <person name="Wohldmann P.E."/>
            <person name="Cook L.L."/>
            <person name="Hickenbotham M.T."/>
            <person name="Eldred J."/>
            <person name="Williams D."/>
            <person name="Bedell J.A."/>
            <person name="Mardis E.R."/>
            <person name="Clifton S.W."/>
            <person name="Chissoe S.L."/>
            <person name="Marra M.A."/>
            <person name="Raymond C."/>
            <person name="Haugen E."/>
            <person name="Gillett W."/>
            <person name="Zhou Y."/>
            <person name="James R."/>
            <person name="Phelps K."/>
            <person name="Iadanoto S."/>
            <person name="Bubb K."/>
            <person name="Simms E."/>
            <person name="Levy R."/>
            <person name="Clendenning J."/>
            <person name="Kaul R."/>
            <person name="Kent W.J."/>
            <person name="Furey T.S."/>
            <person name="Baertsch R.A."/>
            <person name="Brent M.R."/>
            <person name="Keibler E."/>
            <person name="Flicek P."/>
            <person name="Bork P."/>
            <person name="Suyama M."/>
            <person name="Bailey J.A."/>
            <person name="Portnoy M.E."/>
            <person name="Torrents D."/>
            <person name="Chinwalla A.T."/>
            <person name="Gish W.R."/>
            <person name="Eddy S.R."/>
            <person name="McPherson J.D."/>
            <person name="Olson M.V."/>
            <person name="Eichler E.E."/>
            <person name="Green E.D."/>
            <person name="Waterston R.H."/>
            <person name="Wilson R.K."/>
        </authorList>
    </citation>
    <scope>NUCLEOTIDE SEQUENCE [LARGE SCALE GENOMIC DNA] (IMGT ALLELE TRBV24-1*01)</scope>
</reference>
<reference key="2">
    <citation type="book" date="2001" name="The T Cell Receptor FactsBook.">
        <title>The T Cell Receptor FactsBook.</title>
        <editorList>
            <person name="Lefranc M.P."/>
            <person name="Lefranc G."/>
        </editorList>
        <authorList>
            <person name="Lefranc M.P."/>
            <person name="Lefranc G."/>
        </authorList>
    </citation>
    <scope>NOMENCLATURE</scope>
</reference>
<reference key="3">
    <citation type="journal article" date="2004" name="Nat. Rev. Immunol.">
        <title>The many important facets of T-cell repertoire diversity.</title>
        <authorList>
            <person name="Nikolich-Zugich J."/>
            <person name="Slifka M.K."/>
            <person name="Messaoudi I."/>
        </authorList>
    </citation>
    <scope>REVIEW ON T CELL REPERTOIRE DIVERSITY</scope>
</reference>
<reference key="4">
    <citation type="journal article" date="2010" name="Cold Spring Harb. Perspect. Biol.">
        <title>Structural biology of the T-cell receptor: insights into receptor assembly, ligand recognition, and initiation of signaling.</title>
        <authorList>
            <person name="Wucherpfennig K.W."/>
            <person name="Gagnon E."/>
            <person name="Call M.J."/>
            <person name="Huseby E.S."/>
            <person name="Call M.E."/>
        </authorList>
    </citation>
    <scope>REVIEW ON T CELL RECEPTOR-CD3 COMPLEX ASSEMBLY</scope>
    <scope>SUBCELLULAR LOCATION</scope>
</reference>
<reference key="5">
    <citation type="journal article" date="2013" name="Nat. Rev. Immunol.">
        <title>T cell receptor signalling networks: branched, diversified and bounded.</title>
        <authorList>
            <person name="Brownlie R.J."/>
            <person name="Zamoyska R."/>
        </authorList>
    </citation>
    <scope>REVIEW ON T CELL RECEPTOR SIGNALING</scope>
</reference>
<reference key="6">
    <citation type="journal article" date="2014" name="Front. Immunol.">
        <title>Immunoglobulin and T Cell Receptor Genes: IMGT((R)) and the Birth and Rise of Immunoinformatics.</title>
        <authorList>
            <person name="Lefranc M.P."/>
        </authorList>
    </citation>
    <scope>NOMENCLATURE</scope>
</reference>
<reference key="7">
    <citation type="journal article" date="2015" name="Annu. Rev. Immunol.">
        <title>T cell antigen receptor recognition of antigen-presenting molecules.</title>
        <authorList>
            <person name="Rossjohn J."/>
            <person name="Gras S."/>
            <person name="Miles J.J."/>
            <person name="Turner S.J."/>
            <person name="Godfrey D.I."/>
            <person name="McCluskey J."/>
        </authorList>
    </citation>
    <scope>REVIEW ON FUNCTION</scope>
</reference>
<organism>
    <name type="scientific">Homo sapiens</name>
    <name type="common">Human</name>
    <dbReference type="NCBI Taxonomy" id="9606"/>
    <lineage>
        <taxon>Eukaryota</taxon>
        <taxon>Metazoa</taxon>
        <taxon>Chordata</taxon>
        <taxon>Craniata</taxon>
        <taxon>Vertebrata</taxon>
        <taxon>Euteleostomi</taxon>
        <taxon>Mammalia</taxon>
        <taxon>Eutheria</taxon>
        <taxon>Euarchontoglires</taxon>
        <taxon>Primates</taxon>
        <taxon>Haplorrhini</taxon>
        <taxon>Catarrhini</taxon>
        <taxon>Hominidae</taxon>
        <taxon>Homo</taxon>
    </lineage>
</organism>
<dbReference type="EMBL" id="AC244472">
    <property type="status" value="NOT_ANNOTATED_CDS"/>
    <property type="molecule type" value="Genomic_DNA"/>
</dbReference>
<dbReference type="SMR" id="A0A075B6N3"/>
<dbReference type="FunCoup" id="A0A075B6N3">
    <property type="interactions" value="389"/>
</dbReference>
<dbReference type="IMGT_GENE-DB" id="TRBV24-1"/>
<dbReference type="GlyCosmos" id="A0A075B6N3">
    <property type="glycosylation" value="1 site, No reported glycans"/>
</dbReference>
<dbReference type="GlyGen" id="A0A075B6N3">
    <property type="glycosylation" value="1 site"/>
</dbReference>
<dbReference type="BioMuta" id="TRBV24-1"/>
<dbReference type="MassIVE" id="A0A075B6N3"/>
<dbReference type="Ensembl" id="ENST00000390397.2">
    <property type="protein sequence ID" value="ENSP00000374920.2"/>
    <property type="gene ID" value="ENSG00000211750.2"/>
</dbReference>
<dbReference type="UCSC" id="uc003vzx.4">
    <property type="organism name" value="human"/>
</dbReference>
<dbReference type="AGR" id="HGNC:12203"/>
<dbReference type="GeneCards" id="TRBV24-1"/>
<dbReference type="HGNC" id="HGNC:12203">
    <property type="gene designation" value="TRBV24-1"/>
</dbReference>
<dbReference type="HPA" id="ENSG00000211750">
    <property type="expression patterns" value="Tissue enriched (lymphoid)"/>
</dbReference>
<dbReference type="neXtProt" id="NX_A0A075B6N3"/>
<dbReference type="OpenTargets" id="ENSG00000211750"/>
<dbReference type="VEuPathDB" id="HostDB:ENSG00000211750"/>
<dbReference type="GeneTree" id="ENSGT00940000162480"/>
<dbReference type="HOGENOM" id="CLU_077975_9_2_1"/>
<dbReference type="InParanoid" id="A0A075B6N3"/>
<dbReference type="OMA" id="CATRDFH"/>
<dbReference type="OrthoDB" id="9803478at2759"/>
<dbReference type="PAN-GO" id="A0A075B6N3">
    <property type="GO annotations" value="2 GO annotations based on evolutionary models"/>
</dbReference>
<dbReference type="SignaLink" id="A0A075B6N3"/>
<dbReference type="ChiTaRS" id="TRBV24-1">
    <property type="organism name" value="human"/>
</dbReference>
<dbReference type="Pharos" id="A0A075B6N3">
    <property type="development level" value="Tdark"/>
</dbReference>
<dbReference type="PRO" id="PR:A0A075B6N3"/>
<dbReference type="Proteomes" id="UP000005640">
    <property type="component" value="Chromosome 7"/>
</dbReference>
<dbReference type="RNAct" id="A0A075B6N3">
    <property type="molecule type" value="protein"/>
</dbReference>
<dbReference type="Bgee" id="ENSG00000211750">
    <property type="expression patterns" value="Expressed in lymph node and 82 other cell types or tissues"/>
</dbReference>
<dbReference type="GO" id="GO:0005886">
    <property type="term" value="C:plasma membrane"/>
    <property type="evidence" value="ECO:0000318"/>
    <property type="project" value="GO_Central"/>
</dbReference>
<dbReference type="GO" id="GO:0042101">
    <property type="term" value="C:T cell receptor complex"/>
    <property type="evidence" value="ECO:0007669"/>
    <property type="project" value="UniProtKB-KW"/>
</dbReference>
<dbReference type="GO" id="GO:0002250">
    <property type="term" value="P:adaptive immune response"/>
    <property type="evidence" value="ECO:0007669"/>
    <property type="project" value="UniProtKB-KW"/>
</dbReference>
<dbReference type="GO" id="GO:0007166">
    <property type="term" value="P:cell surface receptor signaling pathway"/>
    <property type="evidence" value="ECO:0000318"/>
    <property type="project" value="GO_Central"/>
</dbReference>
<dbReference type="Gene3D" id="2.60.40.10">
    <property type="entry name" value="Immunoglobulins"/>
    <property type="match status" value="1"/>
</dbReference>
<dbReference type="InterPro" id="IPR007110">
    <property type="entry name" value="Ig-like_dom"/>
</dbReference>
<dbReference type="InterPro" id="IPR036179">
    <property type="entry name" value="Ig-like_dom_sf"/>
</dbReference>
<dbReference type="InterPro" id="IPR013783">
    <property type="entry name" value="Ig-like_fold"/>
</dbReference>
<dbReference type="InterPro" id="IPR013106">
    <property type="entry name" value="Ig_V-set"/>
</dbReference>
<dbReference type="InterPro" id="IPR050413">
    <property type="entry name" value="TCR_beta_variable"/>
</dbReference>
<dbReference type="PANTHER" id="PTHR23268:SF54">
    <property type="entry name" value="T CELL RECEPTOR BETA VARIABLE 24-1"/>
    <property type="match status" value="1"/>
</dbReference>
<dbReference type="PANTHER" id="PTHR23268">
    <property type="entry name" value="T-CELL RECEPTOR BETA CHAIN"/>
    <property type="match status" value="1"/>
</dbReference>
<dbReference type="Pfam" id="PF07686">
    <property type="entry name" value="V-set"/>
    <property type="match status" value="1"/>
</dbReference>
<dbReference type="SMART" id="SM00406">
    <property type="entry name" value="IGv"/>
    <property type="match status" value="1"/>
</dbReference>
<dbReference type="SUPFAM" id="SSF48726">
    <property type="entry name" value="Immunoglobulin"/>
    <property type="match status" value="1"/>
</dbReference>
<dbReference type="PROSITE" id="PS50835">
    <property type="entry name" value="IG_LIKE"/>
    <property type="match status" value="1"/>
</dbReference>
<keyword id="KW-1064">Adaptive immunity</keyword>
<keyword id="KW-1003">Cell membrane</keyword>
<keyword id="KW-1015">Disulfide bond</keyword>
<keyword id="KW-0325">Glycoprotein</keyword>
<keyword id="KW-0391">Immunity</keyword>
<keyword id="KW-0393">Immunoglobulin domain</keyword>
<keyword id="KW-0472">Membrane</keyword>
<keyword id="KW-0675">Receptor</keyword>
<keyword id="KW-1185">Reference proteome</keyword>
<keyword id="KW-0732">Signal</keyword>
<keyword id="KW-1279">T cell receptor</keyword>
<protein>
    <recommendedName>
        <fullName evidence="9">T cell receptor beta variable 24-1</fullName>
    </recommendedName>
</protein>
<gene>
    <name evidence="9" type="primary">TRBV24-1</name>
</gene>
<evidence type="ECO:0000255" key="1"/>
<evidence type="ECO:0000255" key="2">
    <source>
        <dbReference type="PROSITE-ProRule" id="PRU00114"/>
    </source>
</evidence>
<evidence type="ECO:0000255" key="3">
    <source>
        <dbReference type="PROSITE-ProRule" id="PRU00498"/>
    </source>
</evidence>
<evidence type="ECO:0000303" key="4">
    <source>
    </source>
</evidence>
<evidence type="ECO:0000303" key="5">
    <source>
    </source>
</evidence>
<evidence type="ECO:0000303" key="6">
    <source>
    </source>
</evidence>
<evidence type="ECO:0000303" key="7">
    <source>
    </source>
</evidence>
<evidence type="ECO:0000303" key="8">
    <source>
    </source>
</evidence>
<evidence type="ECO:0000303" key="9">
    <source ref="2"/>
</evidence>
<evidence type="ECO:0000305" key="10"/>
<comment type="function">
    <text evidence="4 6 7 8">V region of the variable domain of T cell receptor (TR) beta chain that participates in the antigen recognition (PubMed:24600447). Alpha-beta T cell receptors are antigen specific receptors which are essential to the immune response and are present on the cell surface of T lymphocytes. Recognize peptide-major histocompatibility (MH) (pMH) complexes that are displayed by antigen presenting cells (APC), a prerequisite for efficient T cell adaptive immunity against pathogens (PubMed:25493333). Binding of alpha-beta TR to pMH complex initiates TR-CD3 clustering on the cell surface and intracellular activation of LCK that phosphorylates the ITAM motifs of CD3G, CD3D, CD3E and CD247 enabling the recruitment of ZAP70. In turn ZAP70 phosphorylates LAT, which recruits numerous signaling molecules to form the LAT signalosome. The LAT signalosome propagates signal branching to three major signaling pathways, the calcium, the mitogen-activated protein kinase (MAPK) kinase and the nuclear factor NF-kappa-B (NF-kB) pathways, leading to the mobilization of transcription factors that are critical for gene expression and essential for T cell growth and differentiation (PubMed:23524462). The T cell repertoire is generated in the thymus, by V-(D)-J rearrangement. This repertoire is then shaped by intrathymic selection events to generate a peripheral T cell pool of self-MH restricted, non-autoaggressive T cells. Post-thymic interaction of alpha-beta TR with the pMH complexes shapes TR structural and functional avidity (PubMed:15040585).</text>
</comment>
<comment type="subunit">
    <text evidence="5">Alpha-beta TR is a heterodimer composed of an alpha and beta chain; disulfide-linked. The alpha-beta TR is associated with the transmembrane signaling CD3 coreceptor proteins to form the TR-CD3 (TcR or TCR). The assembly of alpha-beta TR heterodimers with CD3 occurs in the endoplasmic reticulum where a single alpha-beta TR heterodimer associates with one CD3D-CD3E heterodimer, one CD3G-CD3E heterodimer and one CD247 homodimer forming a stable octameric structure. CD3D-CD3E and CD3G-CD3E heterodimers preferentially associate with TR alpha and TR beta chains, respectively. The association of the CD247 homodimer is the last step of TcR assembly in the endoplasmic reticulum and is required for transport to the cell surface.</text>
</comment>
<comment type="subcellular location">
    <subcellularLocation>
        <location evidence="5">Cell membrane</location>
    </subcellularLocation>
</comment>
<comment type="polymorphism">
    <text evidence="10">There are several alleles. The sequence shown is that of IMGT allele TRBV24-1*01.</text>
</comment>
<accession>A0A075B6N3</accession>
<proteinExistence type="inferred from homology"/>
<feature type="signal peptide" evidence="1">
    <location>
        <begin position="1"/>
        <end position="21"/>
    </location>
</feature>
<feature type="chain" id="PRO_5001705201" description="T cell receptor beta variable 24-1" evidence="1">
    <location>
        <begin position="22"/>
        <end position="115"/>
    </location>
</feature>
<feature type="domain" description="Ig-like" evidence="2">
    <location>
        <begin position="22"/>
        <end position="115" status="greater than"/>
    </location>
</feature>
<feature type="glycosylation site" description="N-linked (GlcNAc...) asparagine" evidence="3">
    <location>
        <position position="103"/>
    </location>
</feature>
<feature type="disulfide bond" evidence="2">
    <location>
        <begin position="42"/>
        <end position="110"/>
    </location>
</feature>
<feature type="non-terminal residue">
    <location>
        <position position="115"/>
    </location>
</feature>
<name>TVBX1_HUMAN</name>
<sequence length="115" mass="12929">MASLLFFCGAFYLLGTGSMDADVTQTPRNRITKTGKRIMLECSQTKGHDRMYWYRQDPGLGLQLIYYSFDVKDINKGEISDGYSVSRQAQAKFSLSLESAIPNQTALYFCATSDL</sequence>